<name>YI31_SCHPO</name>
<dbReference type="EMBL" id="CU329670">
    <property type="protein sequence ID" value="CAC19746.1"/>
    <property type="molecule type" value="Genomic_DNA"/>
</dbReference>
<dbReference type="RefSeq" id="NP_593513.1">
    <property type="nucleotide sequence ID" value="NM_001018947.2"/>
</dbReference>
<dbReference type="SMR" id="Q9HE12"/>
<dbReference type="BioGRID" id="278915">
    <property type="interactions" value="5"/>
</dbReference>
<dbReference type="FunCoup" id="Q9HE12">
    <property type="interactions" value="109"/>
</dbReference>
<dbReference type="STRING" id="284812.Q9HE12"/>
<dbReference type="iPTMnet" id="Q9HE12"/>
<dbReference type="PaxDb" id="4896-SPAC1399.01c.1"/>
<dbReference type="EnsemblFungi" id="SPAC1399.01c.1">
    <property type="protein sequence ID" value="SPAC1399.01c.1:pep"/>
    <property type="gene ID" value="SPAC1399.01c"/>
</dbReference>
<dbReference type="KEGG" id="spo:2542454"/>
<dbReference type="PomBase" id="SPAC1399.01c"/>
<dbReference type="VEuPathDB" id="FungiDB:SPAC1399.01c"/>
<dbReference type="eggNOG" id="ENOG502QQD4">
    <property type="taxonomic scope" value="Eukaryota"/>
</dbReference>
<dbReference type="HOGENOM" id="CLU_017959_7_0_1"/>
<dbReference type="InParanoid" id="Q9HE12"/>
<dbReference type="OMA" id="GLGFDWN"/>
<dbReference type="PhylomeDB" id="Q9HE12"/>
<dbReference type="PRO" id="PR:Q9HE12"/>
<dbReference type="Proteomes" id="UP000002485">
    <property type="component" value="Chromosome I"/>
</dbReference>
<dbReference type="GO" id="GO:0000324">
    <property type="term" value="C:fungal-type vacuole"/>
    <property type="evidence" value="ECO:0007005"/>
    <property type="project" value="PomBase"/>
</dbReference>
<dbReference type="GO" id="GO:0005886">
    <property type="term" value="C:plasma membrane"/>
    <property type="evidence" value="ECO:0000318"/>
    <property type="project" value="GO_Central"/>
</dbReference>
<dbReference type="GO" id="GO:0005774">
    <property type="term" value="C:vacuolar membrane"/>
    <property type="evidence" value="ECO:0007669"/>
    <property type="project" value="UniProtKB-SubCell"/>
</dbReference>
<dbReference type="GO" id="GO:0042907">
    <property type="term" value="F:xanthine transmembrane transporter activity"/>
    <property type="evidence" value="ECO:0000318"/>
    <property type="project" value="GO_Central"/>
</dbReference>
<dbReference type="GO" id="GO:1904082">
    <property type="term" value="P:pyrimidine nucleobase transmembrane transport"/>
    <property type="evidence" value="ECO:0000255"/>
    <property type="project" value="PomBase"/>
</dbReference>
<dbReference type="GO" id="GO:0042906">
    <property type="term" value="P:xanthine transport"/>
    <property type="evidence" value="ECO:0000318"/>
    <property type="project" value="GO_Central"/>
</dbReference>
<dbReference type="InterPro" id="IPR006043">
    <property type="entry name" value="NCS2"/>
</dbReference>
<dbReference type="InterPro" id="IPR006042">
    <property type="entry name" value="Xan_ur_permease"/>
</dbReference>
<dbReference type="NCBIfam" id="TIGR00801">
    <property type="entry name" value="ncs2"/>
    <property type="match status" value="1"/>
</dbReference>
<dbReference type="PANTHER" id="PTHR42810">
    <property type="entry name" value="PURINE PERMEASE C1399.01C-RELATED"/>
    <property type="match status" value="1"/>
</dbReference>
<dbReference type="PANTHER" id="PTHR42810:SF2">
    <property type="entry name" value="PURINE PERMEASE C1399.01C-RELATED"/>
    <property type="match status" value="1"/>
</dbReference>
<dbReference type="Pfam" id="PF00860">
    <property type="entry name" value="Xan_ur_permease"/>
    <property type="match status" value="2"/>
</dbReference>
<dbReference type="PROSITE" id="PS01116">
    <property type="entry name" value="XANTH_URACIL_PERMASE"/>
    <property type="match status" value="1"/>
</dbReference>
<feature type="chain" id="PRO_0000316576" description="Putative purine permease C1399.01c">
    <location>
        <begin position="1"/>
        <end position="601"/>
    </location>
</feature>
<feature type="transmembrane region" description="Helical" evidence="1">
    <location>
        <begin position="64"/>
        <end position="84"/>
    </location>
</feature>
<feature type="transmembrane region" description="Helical" evidence="1">
    <location>
        <begin position="102"/>
        <end position="122"/>
    </location>
</feature>
<feature type="transmembrane region" description="Helical" evidence="1">
    <location>
        <begin position="131"/>
        <end position="151"/>
    </location>
</feature>
<feature type="transmembrane region" description="Helical" evidence="1">
    <location>
        <begin position="179"/>
        <end position="199"/>
    </location>
</feature>
<feature type="transmembrane region" description="Helical" evidence="1">
    <location>
        <begin position="207"/>
        <end position="227"/>
    </location>
</feature>
<feature type="transmembrane region" description="Helical" evidence="1">
    <location>
        <begin position="264"/>
        <end position="284"/>
    </location>
</feature>
<feature type="transmembrane region" description="Helical" evidence="1">
    <location>
        <begin position="294"/>
        <end position="314"/>
    </location>
</feature>
<feature type="transmembrane region" description="Helical" evidence="1">
    <location>
        <begin position="337"/>
        <end position="357"/>
    </location>
</feature>
<feature type="transmembrane region" description="Helical" evidence="1">
    <location>
        <begin position="424"/>
        <end position="444"/>
    </location>
</feature>
<feature type="transmembrane region" description="Helical" evidence="1">
    <location>
        <begin position="450"/>
        <end position="470"/>
    </location>
</feature>
<feature type="transmembrane region" description="Helical" evidence="1">
    <location>
        <begin position="481"/>
        <end position="501"/>
    </location>
</feature>
<feature type="transmembrane region" description="Helical" evidence="1">
    <location>
        <begin position="522"/>
        <end position="542"/>
    </location>
</feature>
<accession>Q9HE12</accession>
<protein>
    <recommendedName>
        <fullName>Putative purine permease C1399.01c</fullName>
    </recommendedName>
</protein>
<proteinExistence type="inferred from homology"/>
<comment type="subcellular location">
    <subcellularLocation>
        <location evidence="2">Vacuole membrane</location>
        <topology evidence="2">Multi-pass membrane protein</topology>
    </subcellularLocation>
</comment>
<comment type="similarity">
    <text evidence="3">Belongs to the nucleobase:cation symporter-2 (NCS2) (TC 2.A.40) family.</text>
</comment>
<evidence type="ECO:0000255" key="1"/>
<evidence type="ECO:0000269" key="2">
    <source>
    </source>
</evidence>
<evidence type="ECO:0000305" key="3"/>
<organism>
    <name type="scientific">Schizosaccharomyces pombe (strain 972 / ATCC 24843)</name>
    <name type="common">Fission yeast</name>
    <dbReference type="NCBI Taxonomy" id="284812"/>
    <lineage>
        <taxon>Eukaryota</taxon>
        <taxon>Fungi</taxon>
        <taxon>Dikarya</taxon>
        <taxon>Ascomycota</taxon>
        <taxon>Taphrinomycotina</taxon>
        <taxon>Schizosaccharomycetes</taxon>
        <taxon>Schizosaccharomycetales</taxon>
        <taxon>Schizosaccharomycetaceae</taxon>
        <taxon>Schizosaccharomyces</taxon>
    </lineage>
</organism>
<sequence length="601" mass="64572">MSESIQDQDHEKTTIIEKTRRFVLSIFTKDFWIGDYDYSFLLPAIPFTKQKPKSPPFFSLNAKVPVLLALLLGFQHALAMVGGVTSPPRIIAASANLTTEQTNYLVSAGLISSGIMTLIQIARVHIPKTKYYIGTGMLSVLGISFTSVSVAPKVLSQMYENGYCPKDENGTKLPCPDGYGAFLATACVCSLLEIFMSFIPPRILKRLFPPIVTGPVVLLIGTSLISSGLNDWAGGEGSCTGRPTEAEAPGYSLCPSDTSPHALGWGSAQFIGLGFSVFATIIIIERFGPPLMKTTSVVLGLVVGMIISAATGYWDHSIIDAAPVVTFNWVHTFRLRIYGPAVLPMLALYIVNMMEAIGDIGATSDVSMLEVDGPAFDARVQGGILGDGLASLIASLMTTTPLTTFAQNNGVISLTKCANRRAGFFCAVILFFMGLFAKFAAVFVAIPSPVLGGMTTFLFSSVAVSGIAIISQIPFNRRNRFILTASMTLGMGAILVPDWFTYFFEYSGPNKALVGFLDAITLVMENGFAIGAFISIFLNLILPYEFDPDLTNDSPGLSTTNGVNNGIVEVRGIDPNDSLSNTDTEYANENKKDEVDVDKVV</sequence>
<gene>
    <name type="ORF">SPAC1399.01c</name>
</gene>
<reference key="1">
    <citation type="journal article" date="2002" name="Nature">
        <title>The genome sequence of Schizosaccharomyces pombe.</title>
        <authorList>
            <person name="Wood V."/>
            <person name="Gwilliam R."/>
            <person name="Rajandream M.A."/>
            <person name="Lyne M.H."/>
            <person name="Lyne R."/>
            <person name="Stewart A."/>
            <person name="Sgouros J.G."/>
            <person name="Peat N."/>
            <person name="Hayles J."/>
            <person name="Baker S.G."/>
            <person name="Basham D."/>
            <person name="Bowman S."/>
            <person name="Brooks K."/>
            <person name="Brown D."/>
            <person name="Brown S."/>
            <person name="Chillingworth T."/>
            <person name="Churcher C.M."/>
            <person name="Collins M."/>
            <person name="Connor R."/>
            <person name="Cronin A."/>
            <person name="Davis P."/>
            <person name="Feltwell T."/>
            <person name="Fraser A."/>
            <person name="Gentles S."/>
            <person name="Goble A."/>
            <person name="Hamlin N."/>
            <person name="Harris D.E."/>
            <person name="Hidalgo J."/>
            <person name="Hodgson G."/>
            <person name="Holroyd S."/>
            <person name="Hornsby T."/>
            <person name="Howarth S."/>
            <person name="Huckle E.J."/>
            <person name="Hunt S."/>
            <person name="Jagels K."/>
            <person name="James K.D."/>
            <person name="Jones L."/>
            <person name="Jones M."/>
            <person name="Leather S."/>
            <person name="McDonald S."/>
            <person name="McLean J."/>
            <person name="Mooney P."/>
            <person name="Moule S."/>
            <person name="Mungall K.L."/>
            <person name="Murphy L.D."/>
            <person name="Niblett D."/>
            <person name="Odell C."/>
            <person name="Oliver K."/>
            <person name="O'Neil S."/>
            <person name="Pearson D."/>
            <person name="Quail M.A."/>
            <person name="Rabbinowitsch E."/>
            <person name="Rutherford K.M."/>
            <person name="Rutter S."/>
            <person name="Saunders D."/>
            <person name="Seeger K."/>
            <person name="Sharp S."/>
            <person name="Skelton J."/>
            <person name="Simmonds M.N."/>
            <person name="Squares R."/>
            <person name="Squares S."/>
            <person name="Stevens K."/>
            <person name="Taylor K."/>
            <person name="Taylor R.G."/>
            <person name="Tivey A."/>
            <person name="Walsh S.V."/>
            <person name="Warren T."/>
            <person name="Whitehead S."/>
            <person name="Woodward J.R."/>
            <person name="Volckaert G."/>
            <person name="Aert R."/>
            <person name="Robben J."/>
            <person name="Grymonprez B."/>
            <person name="Weltjens I."/>
            <person name="Vanstreels E."/>
            <person name="Rieger M."/>
            <person name="Schaefer M."/>
            <person name="Mueller-Auer S."/>
            <person name="Gabel C."/>
            <person name="Fuchs M."/>
            <person name="Duesterhoeft A."/>
            <person name="Fritzc C."/>
            <person name="Holzer E."/>
            <person name="Moestl D."/>
            <person name="Hilbert H."/>
            <person name="Borzym K."/>
            <person name="Langer I."/>
            <person name="Beck A."/>
            <person name="Lehrach H."/>
            <person name="Reinhardt R."/>
            <person name="Pohl T.M."/>
            <person name="Eger P."/>
            <person name="Zimmermann W."/>
            <person name="Wedler H."/>
            <person name="Wambutt R."/>
            <person name="Purnelle B."/>
            <person name="Goffeau A."/>
            <person name="Cadieu E."/>
            <person name="Dreano S."/>
            <person name="Gloux S."/>
            <person name="Lelaure V."/>
            <person name="Mottier S."/>
            <person name="Galibert F."/>
            <person name="Aves S.J."/>
            <person name="Xiang Z."/>
            <person name="Hunt C."/>
            <person name="Moore K."/>
            <person name="Hurst S.M."/>
            <person name="Lucas M."/>
            <person name="Rochet M."/>
            <person name="Gaillardin C."/>
            <person name="Tallada V.A."/>
            <person name="Garzon A."/>
            <person name="Thode G."/>
            <person name="Daga R.R."/>
            <person name="Cruzado L."/>
            <person name="Jimenez J."/>
            <person name="Sanchez M."/>
            <person name="del Rey F."/>
            <person name="Benito J."/>
            <person name="Dominguez A."/>
            <person name="Revuelta J.L."/>
            <person name="Moreno S."/>
            <person name="Armstrong J."/>
            <person name="Forsburg S.L."/>
            <person name="Cerutti L."/>
            <person name="Lowe T."/>
            <person name="McCombie W.R."/>
            <person name="Paulsen I."/>
            <person name="Potashkin J."/>
            <person name="Shpakovski G.V."/>
            <person name="Ussery D."/>
            <person name="Barrell B.G."/>
            <person name="Nurse P."/>
        </authorList>
    </citation>
    <scope>NUCLEOTIDE SEQUENCE [LARGE SCALE GENOMIC DNA]</scope>
    <source>
        <strain>972 / ATCC 24843</strain>
    </source>
</reference>
<reference key="2">
    <citation type="journal article" date="2006" name="Nat. Biotechnol.">
        <title>ORFeome cloning and global analysis of protein localization in the fission yeast Schizosaccharomyces pombe.</title>
        <authorList>
            <person name="Matsuyama A."/>
            <person name="Arai R."/>
            <person name="Yashiroda Y."/>
            <person name="Shirai A."/>
            <person name="Kamata A."/>
            <person name="Sekido S."/>
            <person name="Kobayashi Y."/>
            <person name="Hashimoto A."/>
            <person name="Hamamoto M."/>
            <person name="Hiraoka Y."/>
            <person name="Horinouchi S."/>
            <person name="Yoshida M."/>
        </authorList>
    </citation>
    <scope>SUBCELLULAR LOCATION [LARGE SCALE ANALYSIS]</scope>
</reference>
<keyword id="KW-0472">Membrane</keyword>
<keyword id="KW-1185">Reference proteome</keyword>
<keyword id="KW-0812">Transmembrane</keyword>
<keyword id="KW-1133">Transmembrane helix</keyword>
<keyword id="KW-0813">Transport</keyword>
<keyword id="KW-0926">Vacuole</keyword>